<proteinExistence type="evidence at protein level"/>
<evidence type="ECO:0000269" key="1">
    <source>
    </source>
</evidence>
<evidence type="ECO:0000269" key="2">
    <source>
    </source>
</evidence>
<evidence type="ECO:0000305" key="3"/>
<evidence type="ECO:0000305" key="4">
    <source>
    </source>
</evidence>
<evidence type="ECO:0007829" key="5">
    <source>
        <dbReference type="PDB" id="8Q6O"/>
    </source>
</evidence>
<gene>
    <name type="primary">gins2</name>
    <name type="synonym">psf2</name>
</gene>
<accession>Q7ZT46</accession>
<accession>Q6GPR6</accession>
<dbReference type="EMBL" id="AB097169">
    <property type="protein sequence ID" value="BAC66459.1"/>
    <property type="molecule type" value="Genomic_DNA"/>
</dbReference>
<dbReference type="EMBL" id="BC073044">
    <property type="protein sequence ID" value="AAH73044.1"/>
    <property type="molecule type" value="mRNA"/>
</dbReference>
<dbReference type="RefSeq" id="NP_001085627.1">
    <property type="nucleotide sequence ID" value="NM_001092158.1"/>
</dbReference>
<dbReference type="PDB" id="8Q6O">
    <property type="method" value="EM"/>
    <property type="resolution" value="3.14 A"/>
    <property type="chains" value="H/N=1-185"/>
</dbReference>
<dbReference type="PDBsum" id="8Q6O"/>
<dbReference type="EMDB" id="EMD-18191"/>
<dbReference type="EMDB" id="EMD-18195"/>
<dbReference type="SMR" id="Q7ZT46"/>
<dbReference type="DNASU" id="444053"/>
<dbReference type="GeneID" id="444053"/>
<dbReference type="KEGG" id="xla:444053"/>
<dbReference type="CTD" id="444053"/>
<dbReference type="OMA" id="DSLNCMY"/>
<dbReference type="OrthoDB" id="1938138at2759"/>
<dbReference type="Proteomes" id="UP000186698">
    <property type="component" value="Chromosome 4L"/>
</dbReference>
<dbReference type="Bgee" id="444053">
    <property type="expression patterns" value="Expressed in blastula and 19 other cell types or tissues"/>
</dbReference>
<dbReference type="GO" id="GO:0071162">
    <property type="term" value="C:CMG complex"/>
    <property type="evidence" value="ECO:0000314"/>
    <property type="project" value="UniProtKB"/>
</dbReference>
<dbReference type="GO" id="GO:0000811">
    <property type="term" value="C:GINS complex"/>
    <property type="evidence" value="ECO:0000353"/>
    <property type="project" value="UniProtKB"/>
</dbReference>
<dbReference type="GO" id="GO:0005654">
    <property type="term" value="C:nucleoplasm"/>
    <property type="evidence" value="ECO:0000304"/>
    <property type="project" value="Reactome"/>
</dbReference>
<dbReference type="GO" id="GO:0005634">
    <property type="term" value="C:nucleus"/>
    <property type="evidence" value="ECO:0000314"/>
    <property type="project" value="UniProtKB"/>
</dbReference>
<dbReference type="GO" id="GO:0003682">
    <property type="term" value="F:chromatin binding"/>
    <property type="evidence" value="ECO:0000314"/>
    <property type="project" value="UniProtKB"/>
</dbReference>
<dbReference type="GO" id="GO:0006260">
    <property type="term" value="P:DNA replication"/>
    <property type="evidence" value="ECO:0000315"/>
    <property type="project" value="UniProtKB"/>
</dbReference>
<dbReference type="GO" id="GO:0006271">
    <property type="term" value="P:DNA strand elongation involved in DNA replication"/>
    <property type="evidence" value="ECO:0000314"/>
    <property type="project" value="UniProtKB"/>
</dbReference>
<dbReference type="GO" id="GO:0000727">
    <property type="term" value="P:double-strand break repair via break-induced replication"/>
    <property type="evidence" value="ECO:0000318"/>
    <property type="project" value="GO_Central"/>
</dbReference>
<dbReference type="GO" id="GO:0032784">
    <property type="term" value="P:regulation of DNA-templated transcription elongation"/>
    <property type="evidence" value="ECO:0000314"/>
    <property type="project" value="UniProtKB"/>
</dbReference>
<dbReference type="CDD" id="cd11712">
    <property type="entry name" value="GINS_A_psf2"/>
    <property type="match status" value="1"/>
</dbReference>
<dbReference type="CDD" id="cd21694">
    <property type="entry name" value="GINS_B_Psf2"/>
    <property type="match status" value="1"/>
</dbReference>
<dbReference type="FunFam" id="1.20.58.1020:FF:000001">
    <property type="entry name" value="DNA replication complex GINS protein PSF2"/>
    <property type="match status" value="1"/>
</dbReference>
<dbReference type="FunFam" id="3.40.5.50:FF:000001">
    <property type="entry name" value="DNA replication complex GINS protein PSF2"/>
    <property type="match status" value="1"/>
</dbReference>
<dbReference type="Gene3D" id="1.20.58.1020">
    <property type="match status" value="1"/>
</dbReference>
<dbReference type="Gene3D" id="3.40.5.50">
    <property type="match status" value="1"/>
</dbReference>
<dbReference type="InterPro" id="IPR021151">
    <property type="entry name" value="GINS_A"/>
</dbReference>
<dbReference type="InterPro" id="IPR036224">
    <property type="entry name" value="GINS_bundle-like_dom_sf"/>
</dbReference>
<dbReference type="InterPro" id="IPR007257">
    <property type="entry name" value="GINS_Psf2"/>
</dbReference>
<dbReference type="InterPro" id="IPR056784">
    <property type="entry name" value="PSF2_N"/>
</dbReference>
<dbReference type="PANTHER" id="PTHR12772">
    <property type="entry name" value="DNA REPLICATION COMPLEX GINS PROTEIN PSF2"/>
    <property type="match status" value="1"/>
</dbReference>
<dbReference type="PANTHER" id="PTHR12772:SF0">
    <property type="entry name" value="DNA REPLICATION COMPLEX GINS PROTEIN PSF2"/>
    <property type="match status" value="1"/>
</dbReference>
<dbReference type="Pfam" id="PF25005">
    <property type="entry name" value="PSF2_N"/>
    <property type="match status" value="1"/>
</dbReference>
<dbReference type="Pfam" id="PF05916">
    <property type="entry name" value="Sld5"/>
    <property type="match status" value="1"/>
</dbReference>
<dbReference type="PIRSF" id="PIRSF028998">
    <property type="entry name" value="GINS_Psf2_subgr"/>
    <property type="match status" value="1"/>
</dbReference>
<dbReference type="SUPFAM" id="SSF158573">
    <property type="entry name" value="GINS helical bundle-like"/>
    <property type="match status" value="1"/>
</dbReference>
<dbReference type="SUPFAM" id="SSF160059">
    <property type="entry name" value="PriA/YqbF domain"/>
    <property type="match status" value="1"/>
</dbReference>
<name>PSF2_XENLA</name>
<organism>
    <name type="scientific">Xenopus laevis</name>
    <name type="common">African clawed frog</name>
    <dbReference type="NCBI Taxonomy" id="8355"/>
    <lineage>
        <taxon>Eukaryota</taxon>
        <taxon>Metazoa</taxon>
        <taxon>Chordata</taxon>
        <taxon>Craniata</taxon>
        <taxon>Vertebrata</taxon>
        <taxon>Euteleostomi</taxon>
        <taxon>Amphibia</taxon>
        <taxon>Batrachia</taxon>
        <taxon>Anura</taxon>
        <taxon>Pipoidea</taxon>
        <taxon>Pipidae</taxon>
        <taxon>Xenopodinae</taxon>
        <taxon>Xenopus</taxon>
        <taxon>Xenopus</taxon>
    </lineage>
</organism>
<feature type="chain" id="PRO_0000194815" description="DNA replication complex GINS protein PSF2">
    <location>
        <begin position="1"/>
        <end position="185"/>
    </location>
</feature>
<feature type="helix" evidence="5">
    <location>
        <begin position="3"/>
        <end position="10"/>
    </location>
</feature>
<feature type="strand" evidence="5">
    <location>
        <begin position="13"/>
        <end position="17"/>
    </location>
</feature>
<feature type="strand" evidence="5">
    <location>
        <begin position="26"/>
        <end position="28"/>
    </location>
</feature>
<feature type="strand" evidence="5">
    <location>
        <begin position="31"/>
        <end position="33"/>
    </location>
</feature>
<feature type="strand" evidence="5">
    <location>
        <begin position="42"/>
        <end position="45"/>
    </location>
</feature>
<feature type="helix" evidence="5">
    <location>
        <begin position="46"/>
        <end position="54"/>
    </location>
</feature>
<feature type="helix" evidence="5">
    <location>
        <begin position="68"/>
        <end position="78"/>
    </location>
</feature>
<feature type="helix" evidence="5">
    <location>
        <begin position="92"/>
        <end position="102"/>
    </location>
</feature>
<feature type="strand" evidence="5">
    <location>
        <begin position="105"/>
        <end position="109"/>
    </location>
</feature>
<feature type="helix" evidence="5">
    <location>
        <begin position="110"/>
        <end position="138"/>
    </location>
</feature>
<feature type="helix" evidence="5">
    <location>
        <begin position="150"/>
        <end position="156"/>
    </location>
</feature>
<feature type="turn" evidence="5">
    <location>
        <begin position="157"/>
        <end position="159"/>
    </location>
</feature>
<feature type="helix" evidence="5">
    <location>
        <begin position="160"/>
        <end position="171"/>
    </location>
</feature>
<keyword id="KW-0002">3D-structure</keyword>
<keyword id="KW-0158">Chromosome</keyword>
<keyword id="KW-0235">DNA replication</keyword>
<keyword id="KW-0539">Nucleus</keyword>
<keyword id="KW-1185">Reference proteome</keyword>
<sequence length="185" mass="21324">MDASEVEFLAEKEQVTVIPNFSLDKVYLIGGDLGPFNPSLPVEVPLWLAINLKQRQKCRIVPPEWMDVEKLEAIRDQERREETFTPMPSPYYMELTKLLLNHAADNIPKADEIRTLVKDTWDTRIAKLRLSADSFVKGQEAHAKLDNLTLMEINTIGTFFTESLNHMYKLRTSLQNPEEGQSQDY</sequence>
<protein>
    <recommendedName>
        <fullName>DNA replication complex GINS protein PSF2</fullName>
    </recommendedName>
    <alternativeName>
        <fullName>GINS complex subunit 2</fullName>
    </alternativeName>
</protein>
<comment type="function">
    <text evidence="1">Required for correct functioning of the GINS complex, a complex that plays an essential role in the initiation of DNA replication, and progression of DNA replication forks. GINS complex is a core component of CDC45-MCM-GINS (CMG) helicase, the molecular machine that unwinds template DNA during replication, and around which the replisome is built.</text>
</comment>
<comment type="subunit">
    <text evidence="1 2 4">Component of the GINS complex which is a heterotetramer of gins1/psf1, gins2/psf2, gins3/psf3 and gins4/sld5 (PubMed:12730133). Component of the CMG helicase complex, composed of the mcm2-7 complex, the GINS complex and cdc45 (Probable) (PubMed:30979826).</text>
</comment>
<comment type="subcellular location">
    <subcellularLocation>
        <location evidence="1">Nucleus</location>
    </subcellularLocation>
    <subcellularLocation>
        <location evidence="1">Chromosome</location>
    </subcellularLocation>
    <text evidence="1">Associates with chromatin.</text>
</comment>
<comment type="similarity">
    <text evidence="3">Belongs to the GINS2/PSF2 family.</text>
</comment>
<reference key="1">
    <citation type="journal article" date="2003" name="Genes Dev.">
        <title>A novel ring-like complex of Xenopus proteins essential for the initiation of DNA replication.</title>
        <authorList>
            <person name="Kubota Y."/>
            <person name="Takase Y."/>
            <person name="Komori Y."/>
            <person name="Hashimoto Y."/>
            <person name="Arata T."/>
            <person name="Kamimura Y."/>
            <person name="Araki H."/>
            <person name="Takisawa H."/>
        </authorList>
    </citation>
    <scope>NUCLEOTIDE SEQUENCE [GENOMIC DNA]</scope>
    <scope>FUNCTION</scope>
    <scope>IDENTIFICATION IN THE GINS COMPLEX</scope>
    <scope>SUBCELLULAR LOCATION</scope>
</reference>
<reference key="2">
    <citation type="submission" date="2004-06" db="EMBL/GenBank/DDBJ databases">
        <authorList>
            <consortium name="NIH - Xenopus Gene Collection (XGC) project"/>
        </authorList>
    </citation>
    <scope>NUCLEOTIDE SEQUENCE [LARGE SCALE MRNA]</scope>
    <source>
        <tissue>Ovary</tissue>
    </source>
</reference>
<reference key="3">
    <citation type="journal article" date="2019" name="Life. Sci Alliance">
        <title>Mitotic replisome disassembly depends on TRAIP ubiquitin ligase activity.</title>
        <authorList>
            <person name="Priego Moreno S."/>
            <person name="Jones R.M."/>
            <person name="Poovathumkadavil D."/>
            <person name="Scaramuzza S."/>
            <person name="Gambus A."/>
        </authorList>
    </citation>
    <scope>IDENTIFICATION IN THE CMG HELICASE COMPLEX</scope>
</reference>
<reference key="4">
    <citation type="journal article" date="2019" name="Nature">
        <title>TRAIP is a master regulator of DNA interstrand crosslink repair.</title>
        <authorList>
            <person name="Wu R.A."/>
            <person name="Semlow D.R."/>
            <person name="Kamimae-Lanning A.N."/>
            <person name="Kochenova O.V."/>
            <person name="Chistol G."/>
            <person name="Hodskinson M.R."/>
            <person name="Amunugama R."/>
            <person name="Sparks J.L."/>
            <person name="Wang M."/>
            <person name="Deng L."/>
            <person name="Mimoso C.A."/>
            <person name="Low E."/>
            <person name="Patel K.J."/>
            <person name="Walter J.C."/>
        </authorList>
    </citation>
    <scope>IDENTIFICATION IN THE CMG HELICASE COMPLEX</scope>
</reference>